<feature type="chain" id="PRO_0000208767" description="Uncharacterized transporter CE2102">
    <location>
        <begin position="1"/>
        <end position="542"/>
    </location>
</feature>
<feature type="transmembrane region" description="Helical" evidence="1">
    <location>
        <begin position="4"/>
        <end position="23"/>
    </location>
</feature>
<feature type="transmembrane region" description="Helical" evidence="1">
    <location>
        <begin position="28"/>
        <end position="47"/>
    </location>
</feature>
<feature type="transmembrane region" description="Helical" evidence="1">
    <location>
        <begin position="51"/>
        <end position="70"/>
    </location>
</feature>
<feature type="transmembrane region" description="Helical" evidence="1">
    <location>
        <begin position="91"/>
        <end position="113"/>
    </location>
</feature>
<feature type="transmembrane region" description="Helical" evidence="1">
    <location>
        <begin position="160"/>
        <end position="182"/>
    </location>
</feature>
<feature type="transmembrane region" description="Helical" evidence="1">
    <location>
        <begin position="363"/>
        <end position="385"/>
    </location>
</feature>
<feature type="transmembrane region" description="Helical" evidence="1">
    <location>
        <begin position="390"/>
        <end position="412"/>
    </location>
</feature>
<feature type="transmembrane region" description="Helical" evidence="1">
    <location>
        <begin position="425"/>
        <end position="447"/>
    </location>
</feature>
<feature type="transmembrane region" description="Helical" evidence="1">
    <location>
        <begin position="457"/>
        <end position="479"/>
    </location>
</feature>
<feature type="transmembrane region" description="Helical" evidence="1">
    <location>
        <begin position="519"/>
        <end position="541"/>
    </location>
</feature>
<feature type="domain" description="RCK C-terminal 1" evidence="2">
    <location>
        <begin position="190"/>
        <end position="272"/>
    </location>
</feature>
<feature type="domain" description="RCK C-terminal 2" evidence="2">
    <location>
        <begin position="274"/>
        <end position="355"/>
    </location>
</feature>
<sequence length="542" mass="57509">MSIFVENQLLALVAIMGIGLLLGRIRFFGFRLGVAAVLFVGLAFSTIEPDITVPPLIYVVGLALFVYTIGLEAGRDFFRSLRSTGLRNNGLALGAIIATTAIAWVVIKALGLAPATGAGMLTGALTNTPAMAAVVDALPALIDDNPTDAARILELPVVAYSLTYPLGVLVVILTIAVCGGLFKVNHEKEAKNAGVAVQELTGRRVRVTRDDLPAISNIPELLDLEVIVSRVERRGQHDQFIPEEGDRTRLGDILTVVGSDDELERAVGLLGEFVDGHPYSDIDLDYRRIFVSDESMVGVPLAKLRNRIPGMLITRIRRGDTDLIAHPDMTLQLGDLVRVVAPAERIKEATHIFGDSYKRLADFNLVPLVVGLSLGVLVGMMEFPLPGGSALSLGNAGGPLLIALLLGAMGRTGKVVWQIPYSANLALRQLGITMFLAAIGTTAGAGFRSALSDPASLLIIGVGALLTLVISVLVLVIGHKVMRIPFGETAGILAGTQTHPAVLSYISEASRNELPAMGYTSVYPLAMVAKIIAAQVLLFLLI</sequence>
<name>Y2102_COREF</name>
<reference key="1">
    <citation type="journal article" date="2003" name="Genome Res.">
        <title>Comparative complete genome sequence analysis of the amino acid replacements responsible for the thermostability of Corynebacterium efficiens.</title>
        <authorList>
            <person name="Nishio Y."/>
            <person name="Nakamura Y."/>
            <person name="Kawarabayasi Y."/>
            <person name="Usuda Y."/>
            <person name="Kimura E."/>
            <person name="Sugimoto S."/>
            <person name="Matsui K."/>
            <person name="Yamagishi A."/>
            <person name="Kikuchi H."/>
            <person name="Ikeo K."/>
            <person name="Gojobori T."/>
        </authorList>
    </citation>
    <scope>NUCLEOTIDE SEQUENCE [LARGE SCALE GENOMIC DNA]</scope>
    <source>
        <strain>DSM 44549 / YS-314 / AJ 12310 / JCM 11189 / NBRC 100395</strain>
    </source>
</reference>
<accession>Q8FNP2</accession>
<protein>
    <recommendedName>
        <fullName>Uncharacterized transporter CE2102</fullName>
    </recommendedName>
</protein>
<proteinExistence type="inferred from homology"/>
<comment type="subcellular location">
    <subcellularLocation>
        <location evidence="3">Cell membrane</location>
        <topology evidence="3">Multi-pass membrane protein</topology>
    </subcellularLocation>
</comment>
<comment type="similarity">
    <text evidence="3">Belongs to the AAE transporter (TC 2.A.81) family.</text>
</comment>
<dbReference type="EMBL" id="BA000035">
    <property type="protein sequence ID" value="BAC18912.1"/>
    <property type="molecule type" value="Genomic_DNA"/>
</dbReference>
<dbReference type="RefSeq" id="WP_006768105.1">
    <property type="nucleotide sequence ID" value="NC_004369.1"/>
</dbReference>
<dbReference type="SMR" id="Q8FNP2"/>
<dbReference type="STRING" id="196164.gene:10742530"/>
<dbReference type="KEGG" id="cef:CE2102"/>
<dbReference type="eggNOG" id="COG0569">
    <property type="taxonomic scope" value="Bacteria"/>
</dbReference>
<dbReference type="eggNOG" id="COG2985">
    <property type="taxonomic scope" value="Bacteria"/>
</dbReference>
<dbReference type="HOGENOM" id="CLU_035023_3_0_11"/>
<dbReference type="OrthoDB" id="9155749at2"/>
<dbReference type="Proteomes" id="UP000001409">
    <property type="component" value="Chromosome"/>
</dbReference>
<dbReference type="GO" id="GO:0005886">
    <property type="term" value="C:plasma membrane"/>
    <property type="evidence" value="ECO:0007669"/>
    <property type="project" value="UniProtKB-SubCell"/>
</dbReference>
<dbReference type="GO" id="GO:0008324">
    <property type="term" value="F:monoatomic cation transmembrane transporter activity"/>
    <property type="evidence" value="ECO:0007669"/>
    <property type="project" value="InterPro"/>
</dbReference>
<dbReference type="GO" id="GO:0006813">
    <property type="term" value="P:potassium ion transport"/>
    <property type="evidence" value="ECO:0007669"/>
    <property type="project" value="InterPro"/>
</dbReference>
<dbReference type="Gene3D" id="3.30.70.1450">
    <property type="entry name" value="Regulator of K+ conductance, C-terminal domain"/>
    <property type="match status" value="1"/>
</dbReference>
<dbReference type="InterPro" id="IPR050144">
    <property type="entry name" value="AAE_transporter"/>
</dbReference>
<dbReference type="InterPro" id="IPR006037">
    <property type="entry name" value="RCK_C"/>
</dbReference>
<dbReference type="InterPro" id="IPR036721">
    <property type="entry name" value="RCK_C_sf"/>
</dbReference>
<dbReference type="InterPro" id="IPR006512">
    <property type="entry name" value="YidE_YbjL"/>
</dbReference>
<dbReference type="NCBIfam" id="TIGR01625">
    <property type="entry name" value="YidE_YbjL_dupl"/>
    <property type="match status" value="2"/>
</dbReference>
<dbReference type="PANTHER" id="PTHR30445">
    <property type="entry name" value="K(+)_H(+) ANTIPORTER SUBUNIT KHTT"/>
    <property type="match status" value="1"/>
</dbReference>
<dbReference type="PANTHER" id="PTHR30445:SF3">
    <property type="entry name" value="TRANSPORT PROTEIN YIDE-RELATED"/>
    <property type="match status" value="1"/>
</dbReference>
<dbReference type="Pfam" id="PF06826">
    <property type="entry name" value="Asp-Al_Ex"/>
    <property type="match status" value="2"/>
</dbReference>
<dbReference type="Pfam" id="PF02080">
    <property type="entry name" value="TrkA_C"/>
    <property type="match status" value="1"/>
</dbReference>
<dbReference type="SUPFAM" id="SSF116726">
    <property type="entry name" value="TrkA C-terminal domain-like"/>
    <property type="match status" value="1"/>
</dbReference>
<dbReference type="PROSITE" id="PS51202">
    <property type="entry name" value="RCK_C"/>
    <property type="match status" value="2"/>
</dbReference>
<organism>
    <name type="scientific">Corynebacterium efficiens (strain DSM 44549 / YS-314 / AJ 12310 / JCM 11189 / NBRC 100395)</name>
    <dbReference type="NCBI Taxonomy" id="196164"/>
    <lineage>
        <taxon>Bacteria</taxon>
        <taxon>Bacillati</taxon>
        <taxon>Actinomycetota</taxon>
        <taxon>Actinomycetes</taxon>
        <taxon>Mycobacteriales</taxon>
        <taxon>Corynebacteriaceae</taxon>
        <taxon>Corynebacterium</taxon>
    </lineage>
</organism>
<evidence type="ECO:0000255" key="1"/>
<evidence type="ECO:0000255" key="2">
    <source>
        <dbReference type="PROSITE-ProRule" id="PRU00544"/>
    </source>
</evidence>
<evidence type="ECO:0000305" key="3"/>
<gene>
    <name type="ordered locus">CE2102</name>
</gene>
<keyword id="KW-1003">Cell membrane</keyword>
<keyword id="KW-0472">Membrane</keyword>
<keyword id="KW-1185">Reference proteome</keyword>
<keyword id="KW-0677">Repeat</keyword>
<keyword id="KW-0812">Transmembrane</keyword>
<keyword id="KW-1133">Transmembrane helix</keyword>
<keyword id="KW-0813">Transport</keyword>